<organism>
    <name type="scientific">Brachyspira hyodysenteriae (strain ATCC 49526 / WA1)</name>
    <dbReference type="NCBI Taxonomy" id="565034"/>
    <lineage>
        <taxon>Bacteria</taxon>
        <taxon>Pseudomonadati</taxon>
        <taxon>Spirochaetota</taxon>
        <taxon>Spirochaetia</taxon>
        <taxon>Brachyspirales</taxon>
        <taxon>Brachyspiraceae</taxon>
        <taxon>Brachyspira</taxon>
    </lineage>
</organism>
<sequence length="308" mass="33979">MNNLEEFLDISEEVKEALHEKKAVVALESTIISHGMPYPENVESALNSEKNIRENNAVPATIAIIKGRIKVGLNKEELEYMGSNKNIAKSSRRDLPVMLALKKDGATTVTTTMIGASLAGIKVFATGGIGGVHRYAQETFDISADLQELSKTNVAVVCAGAKSILDIGLTIEYLETFGIPVLGYKTENFPAFYTRESGYKVDYKIDTTKDIANILDTKWKLGLNGGVLVCNPIPEEYEMDKDYINKIIDETVKEARDKNISGKDVTPYILAKLHSVTENKSLKANKELVYNNCRVAANIAYDYSNLSR</sequence>
<reference key="1">
    <citation type="journal article" date="2009" name="PLoS ONE">
        <title>Genome sequence of the pathogenic intestinal spirochete Brachyspira hyodysenteriae reveals adaptations to its lifestyle in the porcine large intestine.</title>
        <authorList>
            <person name="Bellgard M.I."/>
            <person name="Wanchanthuek P."/>
            <person name="La T."/>
            <person name="Ryan K."/>
            <person name="Moolhuijzen P."/>
            <person name="Albertyn Z."/>
            <person name="Shaban B."/>
            <person name="Motro Y."/>
            <person name="Dunn D.S."/>
            <person name="Schibeci D."/>
            <person name="Hunter A."/>
            <person name="Barrero R."/>
            <person name="Phillips N.D."/>
            <person name="Hampson D.J."/>
        </authorList>
    </citation>
    <scope>NUCLEOTIDE SEQUENCE [LARGE SCALE GENOMIC DNA]</scope>
    <source>
        <strain>ATCC 49526 / WA1</strain>
    </source>
</reference>
<keyword id="KW-0326">Glycosidase</keyword>
<keyword id="KW-0378">Hydrolase</keyword>
<keyword id="KW-0456">Lyase</keyword>
<keyword id="KW-0464">Manganese</keyword>
<keyword id="KW-0479">Metal-binding</keyword>
<comment type="function">
    <text evidence="1">Catalyzes the reversible cleavage of pseudouridine 5'-phosphate (PsiMP) to ribose 5-phosphate and uracil. Functions biologically in the cleavage direction, as part of a pseudouridine degradation pathway.</text>
</comment>
<comment type="catalytic activity">
    <reaction evidence="1">
        <text>D-ribose 5-phosphate + uracil = psi-UMP + H2O</text>
        <dbReference type="Rhea" id="RHEA:18337"/>
        <dbReference type="ChEBI" id="CHEBI:15377"/>
        <dbReference type="ChEBI" id="CHEBI:17568"/>
        <dbReference type="ChEBI" id="CHEBI:58380"/>
        <dbReference type="ChEBI" id="CHEBI:78346"/>
        <dbReference type="EC" id="4.2.1.70"/>
    </reaction>
</comment>
<comment type="cofactor">
    <cofactor evidence="1">
        <name>Mn(2+)</name>
        <dbReference type="ChEBI" id="CHEBI:29035"/>
    </cofactor>
    <text evidence="1">Binds 1 Mn(2+) ion per subunit.</text>
</comment>
<comment type="subunit">
    <text evidence="1">Homotrimer.</text>
</comment>
<comment type="similarity">
    <text evidence="1">Belongs to the pseudouridine-5'-phosphate glycosidase family.</text>
</comment>
<evidence type="ECO:0000255" key="1">
    <source>
        <dbReference type="HAMAP-Rule" id="MF_01876"/>
    </source>
</evidence>
<gene>
    <name evidence="1" type="primary">psuG</name>
    <name type="ordered locus">BHWA1_00903</name>
</gene>
<name>PSUG_BRAHW</name>
<protein>
    <recommendedName>
        <fullName evidence="1">Pseudouridine-5'-phosphate glycosidase</fullName>
        <shortName evidence="1">PsiMP glycosidase</shortName>
        <ecNumber evidence="1">4.2.1.70</ecNumber>
    </recommendedName>
</protein>
<accession>C0QZV6</accession>
<dbReference type="EC" id="4.2.1.70" evidence="1"/>
<dbReference type="EMBL" id="CP001357">
    <property type="protein sequence ID" value="ACN83394.1"/>
    <property type="molecule type" value="Genomic_DNA"/>
</dbReference>
<dbReference type="RefSeq" id="WP_012670443.1">
    <property type="nucleotide sequence ID" value="NC_012225.1"/>
</dbReference>
<dbReference type="SMR" id="C0QZV6"/>
<dbReference type="STRING" id="565034.BHWA1_00903"/>
<dbReference type="GeneID" id="63962013"/>
<dbReference type="KEGG" id="bhy:BHWA1_00903"/>
<dbReference type="eggNOG" id="COG2313">
    <property type="taxonomic scope" value="Bacteria"/>
</dbReference>
<dbReference type="HOGENOM" id="CLU_012201_0_1_12"/>
<dbReference type="Proteomes" id="UP000001803">
    <property type="component" value="Chromosome"/>
</dbReference>
<dbReference type="GO" id="GO:0005737">
    <property type="term" value="C:cytoplasm"/>
    <property type="evidence" value="ECO:0007669"/>
    <property type="project" value="TreeGrafter"/>
</dbReference>
<dbReference type="GO" id="GO:0016798">
    <property type="term" value="F:hydrolase activity, acting on glycosyl bonds"/>
    <property type="evidence" value="ECO:0007669"/>
    <property type="project" value="UniProtKB-KW"/>
</dbReference>
<dbReference type="GO" id="GO:0046872">
    <property type="term" value="F:metal ion binding"/>
    <property type="evidence" value="ECO:0007669"/>
    <property type="project" value="UniProtKB-KW"/>
</dbReference>
<dbReference type="GO" id="GO:0004730">
    <property type="term" value="F:pseudouridylate synthase activity"/>
    <property type="evidence" value="ECO:0007669"/>
    <property type="project" value="UniProtKB-UniRule"/>
</dbReference>
<dbReference type="GO" id="GO:0046113">
    <property type="term" value="P:nucleobase catabolic process"/>
    <property type="evidence" value="ECO:0007669"/>
    <property type="project" value="UniProtKB-UniRule"/>
</dbReference>
<dbReference type="Gene3D" id="3.40.1790.10">
    <property type="entry name" value="Indigoidine synthase domain"/>
    <property type="match status" value="1"/>
</dbReference>
<dbReference type="HAMAP" id="MF_01876">
    <property type="entry name" value="PsiMP_glycosidase"/>
    <property type="match status" value="1"/>
</dbReference>
<dbReference type="InterPro" id="IPR022830">
    <property type="entry name" value="Indigdn_synthA-like"/>
</dbReference>
<dbReference type="InterPro" id="IPR007342">
    <property type="entry name" value="PsuG"/>
</dbReference>
<dbReference type="PANTHER" id="PTHR42909:SF1">
    <property type="entry name" value="CARBOHYDRATE KINASE PFKB DOMAIN-CONTAINING PROTEIN"/>
    <property type="match status" value="1"/>
</dbReference>
<dbReference type="PANTHER" id="PTHR42909">
    <property type="entry name" value="ZGC:136858"/>
    <property type="match status" value="1"/>
</dbReference>
<dbReference type="Pfam" id="PF04227">
    <property type="entry name" value="Indigoidine_A"/>
    <property type="match status" value="1"/>
</dbReference>
<dbReference type="SUPFAM" id="SSF110581">
    <property type="entry name" value="Indigoidine synthase A-like"/>
    <property type="match status" value="1"/>
</dbReference>
<proteinExistence type="inferred from homology"/>
<feature type="chain" id="PRO_0000390509" description="Pseudouridine-5'-phosphate glycosidase">
    <location>
        <begin position="1"/>
        <end position="308"/>
    </location>
</feature>
<feature type="active site" description="Proton donor" evidence="1">
    <location>
        <position position="28"/>
    </location>
</feature>
<feature type="active site" description="Nucleophile" evidence="1">
    <location>
        <position position="162"/>
    </location>
</feature>
<feature type="binding site" evidence="1">
    <location>
        <position position="89"/>
    </location>
    <ligand>
        <name>substrate</name>
    </ligand>
</feature>
<feature type="binding site" evidence="1">
    <location>
        <position position="109"/>
    </location>
    <ligand>
        <name>substrate</name>
    </ligand>
</feature>
<feature type="binding site" evidence="1">
    <location>
        <position position="141"/>
    </location>
    <ligand>
        <name>Mn(2+)</name>
        <dbReference type="ChEBI" id="CHEBI:29035"/>
    </ligand>
</feature>
<feature type="binding site" evidence="1">
    <location>
        <begin position="143"/>
        <end position="145"/>
    </location>
    <ligand>
        <name>substrate</name>
    </ligand>
</feature>